<keyword id="KW-0143">Chaperone</keyword>
<keyword id="KW-0963">Cytoplasm</keyword>
<keyword id="KW-0346">Stress response</keyword>
<sequence length="188" mass="21706">MTKKTSHHKAEQKEKRAGEESGRESEVLDHKIEELENELIGAREQADKLREELLRKAAEFENFRRQKEREALMAGSRTLETVIRELLPFVDDVVRIVEHAPELLEKTEDARPYVDGAELLKKNLVRWLEDKGVTRIDALGKKMDVNLHEAITQVEYPDVEPETVVEVFQDGYVLGDRVLRHTKVVVAK</sequence>
<feature type="chain" id="PRO_1000137554" description="Protein GrpE">
    <location>
        <begin position="1"/>
        <end position="188"/>
    </location>
</feature>
<feature type="region of interest" description="Disordered" evidence="2">
    <location>
        <begin position="1"/>
        <end position="30"/>
    </location>
</feature>
<feature type="compositionally biased region" description="Basic and acidic residues" evidence="2">
    <location>
        <begin position="8"/>
        <end position="30"/>
    </location>
</feature>
<reference key="1">
    <citation type="submission" date="2008-06" db="EMBL/GenBank/DDBJ databases">
        <title>Complete sequence of Chlorobium phaeobacteroides BS1.</title>
        <authorList>
            <consortium name="US DOE Joint Genome Institute"/>
            <person name="Lucas S."/>
            <person name="Copeland A."/>
            <person name="Lapidus A."/>
            <person name="Glavina del Rio T."/>
            <person name="Dalin E."/>
            <person name="Tice H."/>
            <person name="Bruce D."/>
            <person name="Goodwin L."/>
            <person name="Pitluck S."/>
            <person name="Schmutz J."/>
            <person name="Larimer F."/>
            <person name="Land M."/>
            <person name="Hauser L."/>
            <person name="Kyrpides N."/>
            <person name="Ovchinnikova G."/>
            <person name="Li T."/>
            <person name="Liu Z."/>
            <person name="Zhao F."/>
            <person name="Overmann J."/>
            <person name="Bryant D.A."/>
            <person name="Richardson P."/>
        </authorList>
    </citation>
    <scope>NUCLEOTIDE SEQUENCE [LARGE SCALE GENOMIC DNA]</scope>
    <source>
        <strain>BS1</strain>
    </source>
</reference>
<name>GRPE_CHLPB</name>
<dbReference type="EMBL" id="CP001101">
    <property type="protein sequence ID" value="ACE03804.1"/>
    <property type="molecule type" value="Genomic_DNA"/>
</dbReference>
<dbReference type="SMR" id="B3EPC6"/>
<dbReference type="STRING" id="331678.Cphamn1_0853"/>
<dbReference type="KEGG" id="cpb:Cphamn1_0853"/>
<dbReference type="eggNOG" id="COG0576">
    <property type="taxonomic scope" value="Bacteria"/>
</dbReference>
<dbReference type="HOGENOM" id="CLU_057217_5_2_10"/>
<dbReference type="OrthoDB" id="9812586at2"/>
<dbReference type="GO" id="GO:0005737">
    <property type="term" value="C:cytoplasm"/>
    <property type="evidence" value="ECO:0007669"/>
    <property type="project" value="UniProtKB-SubCell"/>
</dbReference>
<dbReference type="GO" id="GO:0000774">
    <property type="term" value="F:adenyl-nucleotide exchange factor activity"/>
    <property type="evidence" value="ECO:0007669"/>
    <property type="project" value="InterPro"/>
</dbReference>
<dbReference type="GO" id="GO:0042803">
    <property type="term" value="F:protein homodimerization activity"/>
    <property type="evidence" value="ECO:0007669"/>
    <property type="project" value="InterPro"/>
</dbReference>
<dbReference type="GO" id="GO:0051087">
    <property type="term" value="F:protein-folding chaperone binding"/>
    <property type="evidence" value="ECO:0007669"/>
    <property type="project" value="InterPro"/>
</dbReference>
<dbReference type="GO" id="GO:0051082">
    <property type="term" value="F:unfolded protein binding"/>
    <property type="evidence" value="ECO:0007669"/>
    <property type="project" value="TreeGrafter"/>
</dbReference>
<dbReference type="GO" id="GO:0006457">
    <property type="term" value="P:protein folding"/>
    <property type="evidence" value="ECO:0007669"/>
    <property type="project" value="InterPro"/>
</dbReference>
<dbReference type="CDD" id="cd00446">
    <property type="entry name" value="GrpE"/>
    <property type="match status" value="1"/>
</dbReference>
<dbReference type="FunFam" id="2.30.22.10:FF:000001">
    <property type="entry name" value="Protein GrpE"/>
    <property type="match status" value="1"/>
</dbReference>
<dbReference type="Gene3D" id="3.90.20.20">
    <property type="match status" value="1"/>
</dbReference>
<dbReference type="Gene3D" id="2.30.22.10">
    <property type="entry name" value="Head domain of nucleotide exchange factor GrpE"/>
    <property type="match status" value="1"/>
</dbReference>
<dbReference type="HAMAP" id="MF_01151">
    <property type="entry name" value="GrpE"/>
    <property type="match status" value="1"/>
</dbReference>
<dbReference type="InterPro" id="IPR000740">
    <property type="entry name" value="GrpE"/>
</dbReference>
<dbReference type="InterPro" id="IPR013805">
    <property type="entry name" value="GrpE_coiled_coil"/>
</dbReference>
<dbReference type="InterPro" id="IPR009012">
    <property type="entry name" value="GrpE_head"/>
</dbReference>
<dbReference type="PANTHER" id="PTHR21237">
    <property type="entry name" value="GRPE PROTEIN"/>
    <property type="match status" value="1"/>
</dbReference>
<dbReference type="PANTHER" id="PTHR21237:SF23">
    <property type="entry name" value="GRPE PROTEIN HOMOLOG, MITOCHONDRIAL"/>
    <property type="match status" value="1"/>
</dbReference>
<dbReference type="Pfam" id="PF01025">
    <property type="entry name" value="GrpE"/>
    <property type="match status" value="1"/>
</dbReference>
<dbReference type="PRINTS" id="PR00773">
    <property type="entry name" value="GRPEPROTEIN"/>
</dbReference>
<dbReference type="SUPFAM" id="SSF58014">
    <property type="entry name" value="Coiled-coil domain of nucleotide exchange factor GrpE"/>
    <property type="match status" value="1"/>
</dbReference>
<dbReference type="SUPFAM" id="SSF51064">
    <property type="entry name" value="Head domain of nucleotide exchange factor GrpE"/>
    <property type="match status" value="1"/>
</dbReference>
<comment type="function">
    <text evidence="1">Participates actively in the response to hyperosmotic and heat shock by preventing the aggregation of stress-denatured proteins, in association with DnaK and GrpE. It is the nucleotide exchange factor for DnaK and may function as a thermosensor. Unfolded proteins bind initially to DnaJ; upon interaction with the DnaJ-bound protein, DnaK hydrolyzes its bound ATP, resulting in the formation of a stable complex. GrpE releases ADP from DnaK; ATP binding to DnaK triggers the release of the substrate protein, thus completing the reaction cycle. Several rounds of ATP-dependent interactions between DnaJ, DnaK and GrpE are required for fully efficient folding.</text>
</comment>
<comment type="subunit">
    <text evidence="1">Homodimer.</text>
</comment>
<comment type="subcellular location">
    <subcellularLocation>
        <location evidence="1">Cytoplasm</location>
    </subcellularLocation>
</comment>
<comment type="similarity">
    <text evidence="1">Belongs to the GrpE family.</text>
</comment>
<evidence type="ECO:0000255" key="1">
    <source>
        <dbReference type="HAMAP-Rule" id="MF_01151"/>
    </source>
</evidence>
<evidence type="ECO:0000256" key="2">
    <source>
        <dbReference type="SAM" id="MobiDB-lite"/>
    </source>
</evidence>
<organism>
    <name type="scientific">Chlorobium phaeobacteroides (strain BS1)</name>
    <dbReference type="NCBI Taxonomy" id="331678"/>
    <lineage>
        <taxon>Bacteria</taxon>
        <taxon>Pseudomonadati</taxon>
        <taxon>Chlorobiota</taxon>
        <taxon>Chlorobiia</taxon>
        <taxon>Chlorobiales</taxon>
        <taxon>Chlorobiaceae</taxon>
        <taxon>Chlorobium/Pelodictyon group</taxon>
        <taxon>Chlorobium</taxon>
    </lineage>
</organism>
<gene>
    <name evidence="1" type="primary">grpE</name>
    <name type="ordered locus">Cphamn1_0853</name>
</gene>
<accession>B3EPC6</accession>
<proteinExistence type="inferred from homology"/>
<protein>
    <recommendedName>
        <fullName evidence="1">Protein GrpE</fullName>
    </recommendedName>
    <alternativeName>
        <fullName evidence="1">HSP-70 cofactor</fullName>
    </alternativeName>
</protein>